<accession>B1NKQ9</accession>
<reference key="1">
    <citation type="journal article" date="2008" name="J. Virol.">
        <title>Full genome-based classification of rotaviruses reveals a common origin between human Wa-Like and porcine rotavirus strains and human DS-1-like and bovine rotavirus strains.</title>
        <authorList>
            <person name="Matthijnssens J."/>
            <person name="Ciarlet M."/>
            <person name="Heiman E.M."/>
            <person name="Arijs I."/>
            <person name="Delbeke T."/>
            <person name="McDonald S.M."/>
            <person name="Palombo E.A."/>
            <person name="Iturriza-Gomara M."/>
            <person name="Maes P."/>
            <person name="Patton J.T."/>
            <person name="Rahman M."/>
            <person name="Van Ranst M."/>
        </authorList>
    </citation>
    <scope>NUCLEOTIDE SEQUENCE [GENOMIC RNA]</scope>
</reference>
<organismHost>
    <name type="scientific">Homo sapiens</name>
    <name type="common">Human</name>
    <dbReference type="NCBI Taxonomy" id="9606"/>
</organismHost>
<evidence type="ECO:0000250" key="1"/>
<evidence type="ECO:0000255" key="2">
    <source>
        <dbReference type="PROSITE-ProRule" id="PRU00539"/>
    </source>
</evidence>
<evidence type="ECO:0000305" key="3"/>
<protein>
    <recommendedName>
        <fullName>RNA-directed RNA polymerase</fullName>
        <ecNumber>2.7.7.48</ecNumber>
    </recommendedName>
    <alternativeName>
        <fullName>Protein VP1</fullName>
    </alternativeName>
</protein>
<feature type="chain" id="PRO_0000368033" description="RNA-directed RNA polymerase">
    <location>
        <begin position="1"/>
        <end position="1088"/>
    </location>
</feature>
<feature type="domain" description="RdRp catalytic" evidence="2">
    <location>
        <begin position="501"/>
        <end position="687"/>
    </location>
</feature>
<keyword id="KW-0460">Magnesium</keyword>
<keyword id="KW-0547">Nucleotide-binding</keyword>
<keyword id="KW-0548">Nucleotidyltransferase</keyword>
<keyword id="KW-0694">RNA-binding</keyword>
<keyword id="KW-0696">RNA-directed RNA polymerase</keyword>
<keyword id="KW-0808">Transferase</keyword>
<keyword id="KW-0693">Viral RNA replication</keyword>
<keyword id="KW-0946">Virion</keyword>
<comment type="function">
    <text evidence="2">RNA-directed RNA polymerase that is involved in both transcription and genome replication. Together with VP3 capping enzyme, forms an enzyme complex positioned near the channels situated at each of the five-fold vertices of the core. Following infection, the outermost layer of the virus is lost, leaving a double-layered particle (DLP) made up of the core and VP6 shell. VP1 then catalyzes the transcription of fully conservative plus-strand genomic RNAs that are extruded through the DLP's channels into the cytoplasm where they function as mRNAs for translation of viral proteins. One copy of each of the viral (+)RNAs is also recruited during core assembly, together with newly synthesized polymerase complexes and VP2. The polymerase of these novo-formed particles catalyzes the synthesis of complementary minus-strands leading to dsRNA formation. To do so, the polymerase specifically recognizes and binds 4 bases 5'-UGUG-3' in the conserved 3'-sequence of plus-strand RNA templates. VP2 presumably activates the autoinhibited VP1-RNA complex to coordinate packaging and genome replication. Once dsRNA synthesis is complete, the polymerase switches to the transcriptional mode, thus providing secondary transcription (By similarity).</text>
</comment>
<comment type="catalytic activity">
    <reaction evidence="2">
        <text>RNA(n) + a ribonucleoside 5'-triphosphate = RNA(n+1) + diphosphate</text>
        <dbReference type="Rhea" id="RHEA:21248"/>
        <dbReference type="Rhea" id="RHEA-COMP:14527"/>
        <dbReference type="Rhea" id="RHEA-COMP:17342"/>
        <dbReference type="ChEBI" id="CHEBI:33019"/>
        <dbReference type="ChEBI" id="CHEBI:61557"/>
        <dbReference type="ChEBI" id="CHEBI:140395"/>
        <dbReference type="EC" id="2.7.7.48"/>
    </reaction>
</comment>
<comment type="cofactor">
    <cofactor evidence="3">
        <name>Mg(2+)</name>
        <dbReference type="ChEBI" id="CHEBI:18420"/>
    </cofactor>
</comment>
<comment type="subunit">
    <text evidence="1 3">Interacts with VP3 (Potential). Interacts with VP2; this interaction activates VP1. Interacts with NSP5; this interaction is probably necessary for the formation of functional virus factories. Interacts with NSP2; this interaction is weak (By similarity).</text>
</comment>
<comment type="subcellular location">
    <subcellularLocation>
        <location evidence="3">Virion</location>
    </subcellularLocation>
    <text evidence="1">Attached inside the inner capsid as a minor component. Also found in spherical cytoplasmic structures, called virus factories, that appear early after infection and are the site of viral replication and packaging (By similarity).</text>
</comment>
<comment type="similarity">
    <text evidence="3">Belongs to the reoviridae RNA-directed RNA polymerase family.</text>
</comment>
<name>RDRP_ROTH7</name>
<organism>
    <name type="scientific">Rotavirus A (isolate RVA/Human/United Kingdom/A64/1987/G10P11[14])</name>
    <name type="common">RV-A</name>
    <dbReference type="NCBI Taxonomy" id="578827"/>
    <lineage>
        <taxon>Viruses</taxon>
        <taxon>Riboviria</taxon>
        <taxon>Orthornavirae</taxon>
        <taxon>Duplornaviricota</taxon>
        <taxon>Resentoviricetes</taxon>
        <taxon>Reovirales</taxon>
        <taxon>Sedoreoviridae</taxon>
        <taxon>Rotavirus</taxon>
        <taxon>Rotavirus A</taxon>
    </lineage>
</organism>
<sequence>MGKYNLILSEYLSFIYNSQSAVQIPIYYSSNSELESRCVEFHSKCLENSKNGLSLKKLFIEYNDVIENATLLSILSYSYDKYNAVERKLVKYARGKPLEADLTVNELDYENNKITSELFPTAEEYTDSLMDPAILTSLSSNLNAVMFWLEKHENDTAEKLKIYKRRLDLFTIVASTVNKYGVPRHNAKYRYEYDVMKDKPYYLVTWANSSIEMLMSVFSHEDYLIARELIVLSYSNRSTLAKLVSSPMSILVALVDINGTFITNEELELEFSNKYVRAIVPDQTFDELKQMLDNMRKAGLVDIPKMIQDWLTDCSIEKFPLMAKIYSWSFHVGFRKQKMLDAALDQLKTEYTEDVDDEMYREYTMLIRDEVVKMLEESVKHDDHLLQDSELARLLSMSSASNGESRQLKFGRKTIFSTKKNMHVMDDMANGRYTPGIIPLVNVDKPIPLGRRDVPGRRTRIIFILPYEYFIAQHAVVEKMLIYAKHTREYAEFYSQSNQLLSYGDVTRFLSNNAMVLYTDVSQWDSSQHNTQPFRKGIIMGLDILANMTNDARVIQTLNLYKQTQINLMDSYVQIPDGNVIKKIQYGAVASGEKQTKAANSIANLALIKTVLSRISNKYSFATKIIRVDGDDNYAVLQFNTEVTKQMVQNVSNDVRETYARMNAKVKALVSTVGIEIAKRYIAGGKIFFRAGINLLNNEKRGQSTQWDQAAVLYSNYIVNRLRGFETDREFIMTKIMQMTSVAITGSLRLFPSERVLTTNSTFKVFDSEDFIIEYGTTDDEVYIQRAFMSLSSQRSGIADEIAASTTFKNYVSKLSEQLLFSKNNIVSRGIALTEKAKLNSYAPISLEKRRAQISALLAMLQKPVTFRSSKITINDILRDIKPFFTISEAHLPIQYQKFMPTLPENVQYIIQCIGSRTYQIEDDGSKSAISRLISKYSVYKPSIEELYKVISLHENEIQLYLISLGIPKIDADTYVGSKIYSQDKYRILESYVYNLLSINYGCYQLFDFNSPDLEKLIRIPFKGKIPAVTFILHLYAKLEIINYAIKNGSWISLFCNYPKSEMIKLWKKMWNITSLRSPYTNANFFQD</sequence>
<proteinExistence type="inferred from homology"/>
<dbReference type="EC" id="2.7.7.48"/>
<dbReference type="EMBL" id="EF583017">
    <property type="protein sequence ID" value="ABU87826.1"/>
    <property type="molecule type" value="Genomic_RNA"/>
</dbReference>
<dbReference type="SMR" id="B1NKQ9"/>
<dbReference type="Proteomes" id="UP000001456">
    <property type="component" value="Genome"/>
</dbReference>
<dbReference type="GO" id="GO:0044423">
    <property type="term" value="C:virion component"/>
    <property type="evidence" value="ECO:0007669"/>
    <property type="project" value="UniProtKB-KW"/>
</dbReference>
<dbReference type="GO" id="GO:0000166">
    <property type="term" value="F:nucleotide binding"/>
    <property type="evidence" value="ECO:0007669"/>
    <property type="project" value="UniProtKB-KW"/>
</dbReference>
<dbReference type="GO" id="GO:0003723">
    <property type="term" value="F:RNA binding"/>
    <property type="evidence" value="ECO:0007669"/>
    <property type="project" value="UniProtKB-KW"/>
</dbReference>
<dbReference type="GO" id="GO:0003968">
    <property type="term" value="F:RNA-directed RNA polymerase activity"/>
    <property type="evidence" value="ECO:0007669"/>
    <property type="project" value="UniProtKB-KW"/>
</dbReference>
<dbReference type="GO" id="GO:0006351">
    <property type="term" value="P:DNA-templated transcription"/>
    <property type="evidence" value="ECO:0007669"/>
    <property type="project" value="InterPro"/>
</dbReference>
<dbReference type="GO" id="GO:0019079">
    <property type="term" value="P:viral genome replication"/>
    <property type="evidence" value="ECO:0007669"/>
    <property type="project" value="InterPro"/>
</dbReference>
<dbReference type="Gene3D" id="1.10.357.80">
    <property type="match status" value="2"/>
</dbReference>
<dbReference type="Gene3D" id="1.20.120.1390">
    <property type="match status" value="1"/>
</dbReference>
<dbReference type="Gene3D" id="3.30.230.140">
    <property type="match status" value="2"/>
</dbReference>
<dbReference type="Gene3D" id="3.30.70.2480">
    <property type="match status" value="1"/>
</dbReference>
<dbReference type="Gene3D" id="1.10.10.1990">
    <property type="entry name" value="Viral RNA-directed RNA polymerase, 4-helical domain"/>
    <property type="match status" value="1"/>
</dbReference>
<dbReference type="InterPro" id="IPR043502">
    <property type="entry name" value="DNA/RNA_pol_sf"/>
</dbReference>
<dbReference type="InterPro" id="IPR042032">
    <property type="entry name" value="RNA-dir_pol_4-hel_dom"/>
</dbReference>
<dbReference type="InterPro" id="IPR001795">
    <property type="entry name" value="RNA-dir_pol_luteovirus"/>
</dbReference>
<dbReference type="InterPro" id="IPR007097">
    <property type="entry name" value="RNA-dir_pol_reovirus"/>
</dbReference>
<dbReference type="InterPro" id="IPR022071">
    <property type="entry name" value="Rotavirus_VP1_C"/>
</dbReference>
<dbReference type="Pfam" id="PF02123">
    <property type="entry name" value="RdRP_4"/>
    <property type="match status" value="1"/>
</dbReference>
<dbReference type="Pfam" id="PF12289">
    <property type="entry name" value="Rotavirus_VP1"/>
    <property type="match status" value="1"/>
</dbReference>
<dbReference type="SUPFAM" id="SSF56672">
    <property type="entry name" value="DNA/RNA polymerases"/>
    <property type="match status" value="1"/>
</dbReference>
<dbReference type="PROSITE" id="PS50523">
    <property type="entry name" value="RDRP_DSRNA_REO"/>
    <property type="match status" value="1"/>
</dbReference>